<organism>
    <name type="scientific">Saccharomyces cerevisiae (strain ATCC 204508 / S288c)</name>
    <name type="common">Baker's yeast</name>
    <dbReference type="NCBI Taxonomy" id="559292"/>
    <lineage>
        <taxon>Eukaryota</taxon>
        <taxon>Fungi</taxon>
        <taxon>Dikarya</taxon>
        <taxon>Ascomycota</taxon>
        <taxon>Saccharomycotina</taxon>
        <taxon>Saccharomycetes</taxon>
        <taxon>Saccharomycetales</taxon>
        <taxon>Saccharomycetaceae</taxon>
        <taxon>Saccharomyces</taxon>
    </lineage>
</organism>
<protein>
    <recommendedName>
        <fullName>Clathrin heavy chain</fullName>
    </recommendedName>
</protein>
<comment type="function">
    <text evidence="3">Clathrin is the major protein of the polyhedral coat of coated pits and vesicles. In yeast, it is involved in the retention of proteins in an intracellular membrane compartment, presumably the trans-Golgi.</text>
</comment>
<comment type="subunit">
    <text evidence="3 5">Clathrin triskelions, composed of 3 heavy chains and 3 light chains, are the basic subunits of the clathrin coat. Interacts with the auxilin-like clathrin uncoating factor SWA2. Interacts with INP53.</text>
</comment>
<comment type="interaction">
    <interactant intactId="EBI-4766">
        <id>P22137</id>
    </interactant>
    <interactant intactId="EBI-2206">
        <id>P36000</id>
        <label>APL2</label>
    </interactant>
    <organismsDiffer>false</organismsDiffer>
    <experiments>3</experiments>
</comment>
<comment type="interaction">
    <interactant intactId="EBI-4766">
        <id>P22137</id>
    </interactant>
    <interactant intactId="EBI-4758">
        <id>P17891</id>
        <label>CLC1</label>
    </interactant>
    <organismsDiffer>false</organismsDiffer>
    <experiments>5</experiments>
</comment>
<comment type="interaction">
    <interactant intactId="EBI-4766">
        <id>P22137</id>
    </interactant>
    <interactant intactId="EBI-17313">
        <id>P32790</id>
        <label>SLA1</label>
    </interactant>
    <organismsDiffer>false</organismsDiffer>
    <experiments>4</experiments>
</comment>
<comment type="interaction">
    <interactant intactId="EBI-4766">
        <id>P22137</id>
    </interactant>
    <interactant intactId="EBI-24811">
        <id>P38856</id>
        <label>YAP1801</label>
    </interactant>
    <organismsDiffer>false</organismsDiffer>
    <experiments>2</experiments>
</comment>
<comment type="subcellular location">
    <subcellularLocation>
        <location>Cytoplasmic vesicle membrane</location>
        <topology>Peripheral membrane protein</topology>
        <orientation>Cytoplasmic side</orientation>
    </subcellularLocation>
    <subcellularLocation>
        <location>Membrane</location>
        <location>Coated pit</location>
        <topology>Peripheral membrane protein</topology>
        <orientation>Cytoplasmic side</orientation>
    </subcellularLocation>
    <text>Cytoplasmic face of coated pits and vesicles.</text>
</comment>
<comment type="domain">
    <text>The C-terminal third of the heavy chains forms the hub of the triskelion. This region contains the trimerization domain and the light-chain binding domain involved in the assembly of the clathrin lattice.</text>
</comment>
<comment type="domain">
    <text evidence="1">The N-terminal seven-bladed beta-propeller is formed by WD40-like repeats, and projects inward from the polyhedral outer clathrin coat. It constitutes a major protein-protein interaction node (By similarity).</text>
</comment>
<comment type="miscellaneous">
    <text evidence="4">Present with 28700 molecules/cell in log phase SD medium.</text>
</comment>
<comment type="similarity">
    <text evidence="6">Belongs to the clathrin heavy chain family.</text>
</comment>
<keyword id="KW-0002">3D-structure</keyword>
<keyword id="KW-0168">Coated pit</keyword>
<keyword id="KW-0968">Cytoplasmic vesicle</keyword>
<keyword id="KW-1017">Isopeptide bond</keyword>
<keyword id="KW-0472">Membrane</keyword>
<keyword id="KW-1185">Reference proteome</keyword>
<keyword id="KW-0677">Repeat</keyword>
<keyword id="KW-0832">Ubl conjugation</keyword>
<accession>P22137</accession>
<accession>D6VTU9</accession>
<evidence type="ECO:0000250" key="1"/>
<evidence type="ECO:0000255" key="2"/>
<evidence type="ECO:0000269" key="3">
    <source>
    </source>
</evidence>
<evidence type="ECO:0000269" key="4">
    <source>
    </source>
</evidence>
<evidence type="ECO:0000269" key="5">
    <source>
    </source>
</evidence>
<evidence type="ECO:0000305" key="6"/>
<evidence type="ECO:0007744" key="7">
    <source>
    </source>
</evidence>
<evidence type="ECO:0007829" key="8">
    <source>
        <dbReference type="PDB" id="9EXG"/>
    </source>
</evidence>
<evidence type="ECO:0007829" key="9">
    <source>
        <dbReference type="PDB" id="9EXT"/>
    </source>
</evidence>
<evidence type="ECO:0007829" key="10">
    <source>
        <dbReference type="PDB" id="9EYT"/>
    </source>
</evidence>
<name>CLH_YEAST</name>
<sequence>MSDLPIEFTELVDLMSLGISPQFLDFRSTTFESDHFVTVRETKDGTNSVAIVDLAKGNEVTRKNMGGDSAIMHPSQMVISVRANGTIVQIFNLETKSKLKSFTLDEPVIFWRWLSETTLGFVTARSILTSNVFDGNVNAKPQLLTLRHANLNNTQIINFVANKNLDWFAVVGILQENGRIAGRIQLFSKQRNISQAIDGHVAIFTNILLEGNGSTPVQVFVTGNRNATTGAGELRIIEIDHDASLPSQYQKETTDIFFPPDATNDFPIAVQVSEKYGIIYLLTKYGFIHLYELETGTNLFVNRITAESVFTAAPYNHENGIACINKKGQVLAVEISTSQIVPYILNKLSNVALALIVATRGGLPGADDLFQKQFESLLLQNDYQNAAKVAASSTSLRNQNTINRLKNIQAPPGAISPILLYFSTLLDKGKLNKEETIELARPVLQQDRKQLFEKWLKEDKLECSEELGDIVKPFDTTLALACYLRAGAHAKVISCLAELQQFEKIIPYCQKVGYQPNFLVLISSLIRSSPDRASEFAVSLLQNPETASQIDIEKIADLFFSQNHIQQGTSLLLDALKGDTPDQGHLQTRVLEVNLLHAPQVADAILGNNIFSHYDKPTIASLSEKAGLYQRALENYTDIKDIKRCVVHTNALPIDWLVGYFGKLNVEQSLACLKALMDNNIQANIQTVVQVATKFSDLIGPSTLIKLFEDYNATEGLYYYLASLVNLTEDKDVVYKYIEAAAKMKQYREIERIVKDNNVYDPERVKNFLKDANLEDQLPLVIVCDRFDFVHEMILYLYKSQNLKFIETYVQQVNPSKTAQVVGALLDMDCDEAFIQSLLQSVLGQVPINELTTEVEKRNRLKILLPFLEQSLSQGIQDQAVYNALAKIYIDSNNSPEKFLKENDQYDTLDVGHYCEKRDPYLAYIAYEKGQNDDDLIRITNENSMYKYQARYLLERSDLDLWNKVLNQENIHRRQLIDSVISVGIPELTDPEPVSLTVQAFMTNGLKLELIELLEKIILEPSPFNENVALQGLLLLSAIKYEPTKVSSYIEKLDNYDADEIAPLCIEHDLKEEAFEIYDKHEMYGKALKVLIEDIMSLDRAASYADKINTPELWSQIGTAQLDGLRIPDAIESYIKAEDPSNYENVIDIAEQAGKYEELIPFLLMARKTLKEPKIDGALILAYAELNKIHEIENLLAGSNVANLDHVGDKLFENKEYKAARLCYSAVSNYSKLASTLVYLGDYQAAVDTARKASNIKVWKLVNDACIEKKEFKLAQICGLNLIVHAEELDELVERYESNGYFEELISLFEAGLGLERAHMGMFTELAILYSKYEPDKTFEHLKLFWSRINIPKVIRAVEQAHLWSELVFLYAHYDEWDNAALTLIEKSTKDLDHAYFKEVVVKVSNLEIYYKAINFYVKFHPSLLVDLLTSLTPRLDIPRTVKIFSKSDNLPLIKPFLINVLPKNNSVVNQAYHDLMIEEEDYKALQDAVDSYDKFDQLGLASRLESHKLIFFKKIGALLYRRNKKWAKSLSILKEEKLWKDAIETAAISQDPKVVEALLTYFVETGNREGFVALLYAAYNLVRIEFVLEISWMNSLEDYIKPFEISIKKEQNDSIKKITEELAKKSGSNEEHKDGQPLMLMNSAMNVQPTGF</sequence>
<gene>
    <name type="primary">CHC1</name>
    <name type="ordered locus">YGL206C</name>
</gene>
<reference key="1">
    <citation type="journal article" date="1991" name="J. Cell Biol.">
        <title>Sequence of the clathrin heavy chain from Saccharomyces cerevisiae and requirement of the COOH terminus for clathrin function.</title>
        <authorList>
            <person name="Lemmon S.K."/>
            <person name="Pellicena-Palle A."/>
            <person name="Conley K."/>
            <person name="Freund C.L."/>
        </authorList>
    </citation>
    <scope>NUCLEOTIDE SEQUENCE [GENOMIC DNA]</scope>
    <source>
        <strain>ATCC 204508 / S288c</strain>
    </source>
</reference>
<reference key="2">
    <citation type="journal article" date="1997" name="Yeast">
        <title>Analysis of 21.7 kb DNA sequence from the left arm of chromosome VII reveals 11 open reading frames: two correspond to new genes.</title>
        <authorList>
            <person name="Feuermann M."/>
            <person name="Simeonava L."/>
            <person name="Souciet J.-L."/>
            <person name="Potier S."/>
        </authorList>
    </citation>
    <scope>NUCLEOTIDE SEQUENCE [GENOMIC DNA]</scope>
</reference>
<reference key="3">
    <citation type="journal article" date="1997" name="Nature">
        <title>The nucleotide sequence of Saccharomyces cerevisiae chromosome VII.</title>
        <authorList>
            <person name="Tettelin H."/>
            <person name="Agostoni-Carbone M.L."/>
            <person name="Albermann K."/>
            <person name="Albers M."/>
            <person name="Arroyo J."/>
            <person name="Backes U."/>
            <person name="Barreiros T."/>
            <person name="Bertani I."/>
            <person name="Bjourson A.J."/>
            <person name="Brueckner M."/>
            <person name="Bruschi C.V."/>
            <person name="Carignani G."/>
            <person name="Castagnoli L."/>
            <person name="Cerdan E."/>
            <person name="Clemente M.L."/>
            <person name="Coblenz A."/>
            <person name="Coglievina M."/>
            <person name="Coissac E."/>
            <person name="Defoor E."/>
            <person name="Del Bino S."/>
            <person name="Delius H."/>
            <person name="Delneri D."/>
            <person name="de Wergifosse P."/>
            <person name="Dujon B."/>
            <person name="Durand P."/>
            <person name="Entian K.-D."/>
            <person name="Eraso P."/>
            <person name="Escribano V."/>
            <person name="Fabiani L."/>
            <person name="Fartmann B."/>
            <person name="Feroli F."/>
            <person name="Feuermann M."/>
            <person name="Frontali L."/>
            <person name="Garcia-Gonzalez M."/>
            <person name="Garcia-Saez M.I."/>
            <person name="Goffeau A."/>
            <person name="Guerreiro P."/>
            <person name="Hani J."/>
            <person name="Hansen M."/>
            <person name="Hebling U."/>
            <person name="Hernandez K."/>
            <person name="Heumann K."/>
            <person name="Hilger F."/>
            <person name="Hofmann B."/>
            <person name="Indge K.J."/>
            <person name="James C.M."/>
            <person name="Klima R."/>
            <person name="Koetter P."/>
            <person name="Kramer B."/>
            <person name="Kramer W."/>
            <person name="Lauquin G."/>
            <person name="Leuther H."/>
            <person name="Louis E.J."/>
            <person name="Maillier E."/>
            <person name="Marconi A."/>
            <person name="Martegani E."/>
            <person name="Mazon M.J."/>
            <person name="Mazzoni C."/>
            <person name="McReynolds A.D.K."/>
            <person name="Melchioretto P."/>
            <person name="Mewes H.-W."/>
            <person name="Minenkova O."/>
            <person name="Mueller-Auer S."/>
            <person name="Nawrocki A."/>
            <person name="Netter P."/>
            <person name="Neu R."/>
            <person name="Nombela C."/>
            <person name="Oliver S.G."/>
            <person name="Panzeri L."/>
            <person name="Paoluzi S."/>
            <person name="Plevani P."/>
            <person name="Portetelle D."/>
            <person name="Portillo F."/>
            <person name="Potier S."/>
            <person name="Purnelle B."/>
            <person name="Rieger M."/>
            <person name="Riles L."/>
            <person name="Rinaldi T."/>
            <person name="Robben J."/>
            <person name="Rodrigues-Pousada C."/>
            <person name="Rodriguez-Belmonte E."/>
            <person name="Rodriguez-Torres A.M."/>
            <person name="Rose M."/>
            <person name="Ruzzi M."/>
            <person name="Saliola M."/>
            <person name="Sanchez-Perez M."/>
            <person name="Schaefer B."/>
            <person name="Schaefer M."/>
            <person name="Scharfe M."/>
            <person name="Schmidheini T."/>
            <person name="Schreer A."/>
            <person name="Skala J."/>
            <person name="Souciet J.-L."/>
            <person name="Steensma H.Y."/>
            <person name="Talla E."/>
            <person name="Thierry A."/>
            <person name="Vandenbol M."/>
            <person name="van der Aart Q.J.M."/>
            <person name="Van Dyck L."/>
            <person name="Vanoni M."/>
            <person name="Verhasselt P."/>
            <person name="Voet M."/>
            <person name="Volckaert G."/>
            <person name="Wambutt R."/>
            <person name="Watson M.D."/>
            <person name="Weber N."/>
            <person name="Wedler E."/>
            <person name="Wedler H."/>
            <person name="Wipfli P."/>
            <person name="Wolf K."/>
            <person name="Wright L.F."/>
            <person name="Zaccaria P."/>
            <person name="Zimmermann M."/>
            <person name="Zollner A."/>
            <person name="Kleine K."/>
        </authorList>
    </citation>
    <scope>NUCLEOTIDE SEQUENCE [LARGE SCALE GENOMIC DNA]</scope>
    <source>
        <strain>ATCC 204508 / S288c</strain>
    </source>
</reference>
<reference key="4">
    <citation type="journal article" date="2014" name="G3 (Bethesda)">
        <title>The reference genome sequence of Saccharomyces cerevisiae: Then and now.</title>
        <authorList>
            <person name="Engel S.R."/>
            <person name="Dietrich F.S."/>
            <person name="Fisk D.G."/>
            <person name="Binkley G."/>
            <person name="Balakrishnan R."/>
            <person name="Costanzo M.C."/>
            <person name="Dwight S.S."/>
            <person name="Hitz B.C."/>
            <person name="Karra K."/>
            <person name="Nash R.S."/>
            <person name="Weng S."/>
            <person name="Wong E.D."/>
            <person name="Lloyd P."/>
            <person name="Skrzypek M.S."/>
            <person name="Miyasato S.R."/>
            <person name="Simison M."/>
            <person name="Cherry J.M."/>
        </authorList>
    </citation>
    <scope>GENOME REANNOTATION</scope>
    <source>
        <strain>ATCC 204508 / S288c</strain>
    </source>
</reference>
<reference key="5">
    <citation type="journal article" date="2003" name="Mol. Biol. Cell">
        <title>The synaptojanin-like protein Inp53/Sjl3 functions with clathrin in a yeast TGN-to-endosome pathway distinct from the GGA protein-dependent pathway.</title>
        <authorList>
            <person name="Ha S.-A."/>
            <person name="Torabinejad J."/>
            <person name="DeWald D.B."/>
            <person name="Wenk M.R."/>
            <person name="Lucast L."/>
            <person name="De Camilli P."/>
            <person name="Newitt R.A."/>
            <person name="Aebersold R."/>
            <person name="Nothwehr S.F."/>
        </authorList>
    </citation>
    <scope>FUNCTION</scope>
    <scope>INTERACTION WITH INP53</scope>
</reference>
<reference key="6">
    <citation type="journal article" date="2006" name="Mol. Biol. Cell">
        <title>Dissection of Swa2p/auxilin domain requirements for cochaperoning Hsp70 clathrin-uncoating activity in vivo.</title>
        <authorList>
            <person name="Xiao J."/>
            <person name="Kim L.S."/>
            <person name="Graham T.R."/>
        </authorList>
    </citation>
    <scope>INTERACTION WITH SWA2</scope>
</reference>
<reference key="7">
    <citation type="journal article" date="2003" name="Nature">
        <title>Global analysis of protein expression in yeast.</title>
        <authorList>
            <person name="Ghaemmaghami S."/>
            <person name="Huh W.-K."/>
            <person name="Bower K."/>
            <person name="Howson R.W."/>
            <person name="Belle A."/>
            <person name="Dephoure N."/>
            <person name="O'Shea E.K."/>
            <person name="Weissman J.S."/>
        </authorList>
    </citation>
    <scope>LEVEL OF PROTEIN EXPRESSION [LARGE SCALE ANALYSIS]</scope>
</reference>
<reference key="8">
    <citation type="journal article" date="2012" name="Proteomics">
        <title>Sites of ubiquitin attachment in Saccharomyces cerevisiae.</title>
        <authorList>
            <person name="Starita L.M."/>
            <person name="Lo R.S."/>
            <person name="Eng J.K."/>
            <person name="von Haller P.D."/>
            <person name="Fields S."/>
        </authorList>
    </citation>
    <scope>UBIQUITINATION [LARGE SCALE ANALYSIS] AT LYS-1107</scope>
    <scope>IDENTIFICATION BY MASS SPECTROMETRY [LARGE SCALE ANALYSIS]</scope>
</reference>
<feature type="chain" id="PRO_0000205785" description="Clathrin heavy chain">
    <location>
        <begin position="1"/>
        <end position="1653"/>
    </location>
</feature>
<feature type="repeat" description="CHCR 1">
    <location>
        <begin position="543"/>
        <end position="689"/>
    </location>
</feature>
<feature type="repeat" description="CHCR 2">
    <location>
        <begin position="692"/>
        <end position="834"/>
    </location>
</feature>
<feature type="repeat" description="CHCR 3">
    <location>
        <begin position="839"/>
        <end position="978"/>
    </location>
</feature>
<feature type="repeat" description="CHCR 4">
    <location>
        <begin position="985"/>
        <end position="1130"/>
    </location>
</feature>
<feature type="repeat" description="CHCR 5">
    <location>
        <begin position="1134"/>
        <end position="1275"/>
    </location>
</feature>
<feature type="repeat" description="CHCR 6">
    <location>
        <begin position="1280"/>
        <end position="1426"/>
    </location>
</feature>
<feature type="repeat" description="CHCR 7">
    <location>
        <begin position="1429"/>
        <end position="1572"/>
    </location>
</feature>
<feature type="region of interest" description="Globular terminal domain">
    <location>
        <begin position="1"/>
        <end position="483"/>
    </location>
</feature>
<feature type="region of interest" description="WD40-like repeat 1">
    <location>
        <begin position="23"/>
        <end position="66"/>
    </location>
</feature>
<feature type="region of interest" description="WD40-like repeat 2">
    <location>
        <begin position="67"/>
        <end position="107"/>
    </location>
</feature>
<feature type="region of interest" description="WD40-like repeat 3">
    <location>
        <begin position="108"/>
        <end position="152"/>
    </location>
</feature>
<feature type="region of interest" description="WD40-like repeat 4">
    <location>
        <begin position="153"/>
        <end position="198"/>
    </location>
</feature>
<feature type="region of interest" description="WD40-like repeat 5">
    <location>
        <begin position="199"/>
        <end position="263"/>
    </location>
</feature>
<feature type="region of interest" description="WD40-like repeat 6">
    <location>
        <begin position="264"/>
        <end position="307"/>
    </location>
</feature>
<feature type="region of interest" description="WD40-like repeat 7">
    <location>
        <begin position="308"/>
        <end position="336"/>
    </location>
</feature>
<feature type="region of interest" description="Binding site for the uncoating ATPase, involved in lattice disassembly" evidence="2">
    <location>
        <begin position="453"/>
        <end position="469"/>
    </location>
</feature>
<feature type="region of interest" description="Flexible linker">
    <location>
        <begin position="484"/>
        <end position="527"/>
    </location>
</feature>
<feature type="region of interest" description="Heavy chain arm">
    <location>
        <begin position="528"/>
        <end position="1653"/>
    </location>
</feature>
<feature type="region of interest" description="Distal segment">
    <location>
        <begin position="528"/>
        <end status="unknown"/>
    </location>
</feature>
<feature type="region of interest" description="Involved in binding clathrin light chain" evidence="1">
    <location>
        <begin position="1219"/>
        <end position="1528"/>
    </location>
</feature>
<feature type="region of interest" description="Proximal segment">
    <location>
        <begin status="unknown"/>
        <end position="1653"/>
    </location>
</feature>
<feature type="cross-link" description="Glycyl lysine isopeptide (Lys-Gly) (interchain with G-Cter in ubiquitin)" evidence="7">
    <location>
        <position position="1107"/>
    </location>
</feature>
<feature type="helix" evidence="8">
    <location>
        <begin position="1"/>
        <end position="3"/>
    </location>
</feature>
<feature type="strand" evidence="10">
    <location>
        <begin position="5"/>
        <end position="13"/>
    </location>
</feature>
<feature type="helix" evidence="10">
    <location>
        <begin position="14"/>
        <end position="17"/>
    </location>
</feature>
<feature type="helix" evidence="10">
    <location>
        <begin position="21"/>
        <end position="23"/>
    </location>
</feature>
<feature type="turn" evidence="10">
    <location>
        <begin position="26"/>
        <end position="28"/>
    </location>
</feature>
<feature type="strand" evidence="10">
    <location>
        <begin position="29"/>
        <end position="33"/>
    </location>
</feature>
<feature type="strand" evidence="10">
    <location>
        <begin position="36"/>
        <end position="41"/>
    </location>
</feature>
<feature type="strand" evidence="9">
    <location>
        <begin position="43"/>
        <end position="46"/>
    </location>
</feature>
<feature type="strand" evidence="10">
    <location>
        <begin position="48"/>
        <end position="53"/>
    </location>
</feature>
<feature type="turn" evidence="10">
    <location>
        <begin position="54"/>
        <end position="58"/>
    </location>
</feature>
<feature type="strand" evidence="10">
    <location>
        <begin position="59"/>
        <end position="65"/>
    </location>
</feature>
<feature type="strand" evidence="10">
    <location>
        <begin position="68"/>
        <end position="72"/>
    </location>
</feature>
<feature type="strand" evidence="10">
    <location>
        <begin position="74"/>
        <end position="83"/>
    </location>
</feature>
<feature type="turn" evidence="10">
    <location>
        <begin position="84"/>
        <end position="86"/>
    </location>
</feature>
<feature type="strand" evidence="10">
    <location>
        <begin position="87"/>
        <end position="92"/>
    </location>
</feature>
<feature type="turn" evidence="10">
    <location>
        <begin position="93"/>
        <end position="96"/>
    </location>
</feature>
<feature type="strand" evidence="10">
    <location>
        <begin position="97"/>
        <end position="103"/>
    </location>
</feature>
<feature type="strand" evidence="10">
    <location>
        <begin position="108"/>
        <end position="131"/>
    </location>
</feature>
<feature type="helix" evidence="10">
    <location>
        <begin position="132"/>
        <end position="134"/>
    </location>
</feature>
<feature type="strand" evidence="10">
    <location>
        <begin position="142"/>
        <end position="146"/>
    </location>
</feature>
<feature type="helix" evidence="10">
    <location>
        <begin position="149"/>
        <end position="151"/>
    </location>
</feature>
<feature type="strand" evidence="10">
    <location>
        <begin position="155"/>
        <end position="161"/>
    </location>
</feature>
<feature type="strand" evidence="10">
    <location>
        <begin position="165"/>
        <end position="176"/>
    </location>
</feature>
<feature type="strand" evidence="10">
    <location>
        <begin position="179"/>
        <end position="188"/>
    </location>
</feature>
<feature type="turn" evidence="10">
    <location>
        <begin position="189"/>
        <end position="192"/>
    </location>
</feature>
<feature type="strand" evidence="10">
    <location>
        <begin position="193"/>
        <end position="198"/>
    </location>
</feature>
<feature type="strand" evidence="10">
    <location>
        <begin position="200"/>
        <end position="207"/>
    </location>
</feature>
<feature type="strand" evidence="10">
    <location>
        <begin position="217"/>
        <end position="225"/>
    </location>
</feature>
<feature type="turn" evidence="10">
    <location>
        <begin position="227"/>
        <end position="229"/>
    </location>
</feature>
<feature type="strand" evidence="10">
    <location>
        <begin position="232"/>
        <end position="240"/>
    </location>
</feature>
<feature type="strand" evidence="10">
    <location>
        <begin position="252"/>
        <end position="256"/>
    </location>
</feature>
<feature type="strand" evidence="10">
    <location>
        <begin position="267"/>
        <end position="273"/>
    </location>
</feature>
<feature type="turn" evidence="10">
    <location>
        <begin position="274"/>
        <end position="277"/>
    </location>
</feature>
<feature type="strand" evidence="10">
    <location>
        <begin position="278"/>
        <end position="283"/>
    </location>
</feature>
<feature type="strand" evidence="10">
    <location>
        <begin position="286"/>
        <end position="292"/>
    </location>
</feature>
<feature type="turn" evidence="10">
    <location>
        <begin position="293"/>
        <end position="295"/>
    </location>
</feature>
<feature type="strand" evidence="10">
    <location>
        <begin position="298"/>
        <end position="304"/>
    </location>
</feature>
<feature type="strand" evidence="10">
    <location>
        <begin position="309"/>
        <end position="315"/>
    </location>
</feature>
<feature type="turn" evidence="10">
    <location>
        <begin position="316"/>
        <end position="319"/>
    </location>
</feature>
<feature type="strand" evidence="10">
    <location>
        <begin position="320"/>
        <end position="325"/>
    </location>
</feature>
<feature type="strand" evidence="10">
    <location>
        <begin position="329"/>
        <end position="335"/>
    </location>
</feature>
<feature type="turn" evidence="10">
    <location>
        <begin position="337"/>
        <end position="339"/>
    </location>
</feature>
<feature type="helix" evidence="10">
    <location>
        <begin position="340"/>
        <end position="346"/>
    </location>
</feature>
<feature type="helix" evidence="10">
    <location>
        <begin position="351"/>
        <end position="361"/>
    </location>
</feature>
<proteinExistence type="evidence at protein level"/>
<dbReference type="EMBL" id="X52900">
    <property type="protein sequence ID" value="CAA37082.1"/>
    <property type="molecule type" value="Genomic_DNA"/>
</dbReference>
<dbReference type="EMBL" id="Z72728">
    <property type="protein sequence ID" value="CAA96919.1"/>
    <property type="molecule type" value="Genomic_DNA"/>
</dbReference>
<dbReference type="EMBL" id="BK006941">
    <property type="protein sequence ID" value="DAA07910.1"/>
    <property type="molecule type" value="Genomic_DNA"/>
</dbReference>
<dbReference type="PIR" id="A36349">
    <property type="entry name" value="A36349"/>
</dbReference>
<dbReference type="RefSeq" id="NP_011309.1">
    <property type="nucleotide sequence ID" value="NM_001181071.1"/>
</dbReference>
<dbReference type="PDB" id="9EX5">
    <property type="method" value="X-ray"/>
    <property type="resolution" value="2.01 A"/>
    <property type="chains" value="A/B/C=1-369"/>
</dbReference>
<dbReference type="PDB" id="9EXF">
    <property type="method" value="X-ray"/>
    <property type="resolution" value="1.95 A"/>
    <property type="chains" value="A/B/C/D=1-369"/>
</dbReference>
<dbReference type="PDB" id="9EXG">
    <property type="method" value="X-ray"/>
    <property type="resolution" value="1.74 A"/>
    <property type="chains" value="A/B/C=1-369"/>
</dbReference>
<dbReference type="PDB" id="9EXT">
    <property type="method" value="X-ray"/>
    <property type="resolution" value="2.75 A"/>
    <property type="chains" value="A/B=1-369"/>
</dbReference>
<dbReference type="PDB" id="9EYT">
    <property type="method" value="X-ray"/>
    <property type="resolution" value="1.74 A"/>
    <property type="chains" value="A=1-369"/>
</dbReference>
<dbReference type="PDBsum" id="9EX5"/>
<dbReference type="PDBsum" id="9EXF"/>
<dbReference type="PDBsum" id="9EXG"/>
<dbReference type="PDBsum" id="9EXT"/>
<dbReference type="PDBsum" id="9EYT"/>
<dbReference type="SMR" id="P22137"/>
<dbReference type="BioGRID" id="33050">
    <property type="interactions" value="170"/>
</dbReference>
<dbReference type="ComplexPortal" id="CPX-1616">
    <property type="entry name" value="Clathrin complex"/>
</dbReference>
<dbReference type="DIP" id="DIP-2279N"/>
<dbReference type="FunCoup" id="P22137">
    <property type="interactions" value="1581"/>
</dbReference>
<dbReference type="IntAct" id="P22137">
    <property type="interactions" value="112"/>
</dbReference>
<dbReference type="MINT" id="P22137"/>
<dbReference type="STRING" id="4932.YGL206C"/>
<dbReference type="iPTMnet" id="P22137"/>
<dbReference type="PaxDb" id="4932-YGL206C"/>
<dbReference type="PeptideAtlas" id="P22137"/>
<dbReference type="EnsemblFungi" id="YGL206C_mRNA">
    <property type="protein sequence ID" value="YGL206C"/>
    <property type="gene ID" value="YGL206C"/>
</dbReference>
<dbReference type="GeneID" id="852666"/>
<dbReference type="KEGG" id="sce:YGL206C"/>
<dbReference type="AGR" id="SGD:S000003174"/>
<dbReference type="SGD" id="S000003174">
    <property type="gene designation" value="CHC1"/>
</dbReference>
<dbReference type="VEuPathDB" id="FungiDB:YGL206C"/>
<dbReference type="eggNOG" id="KOG0985">
    <property type="taxonomic scope" value="Eukaryota"/>
</dbReference>
<dbReference type="GeneTree" id="ENSGT00950000183166"/>
<dbReference type="HOGENOM" id="CLU_002136_0_0_1"/>
<dbReference type="InParanoid" id="P22137"/>
<dbReference type="OMA" id="HCYDLLH"/>
<dbReference type="OrthoDB" id="2113814at2759"/>
<dbReference type="BioCyc" id="YEAST:G3O-30683-MONOMER"/>
<dbReference type="Reactome" id="R-SCE-432720">
    <property type="pathway name" value="Lysosome Vesicle Biogenesis"/>
</dbReference>
<dbReference type="Reactome" id="R-SCE-437239">
    <property type="pathway name" value="Recycling pathway of L1"/>
</dbReference>
<dbReference type="Reactome" id="R-SCE-8856828">
    <property type="pathway name" value="Clathrin-mediated endocytosis"/>
</dbReference>
<dbReference type="Reactome" id="R-SCE-8866427">
    <property type="pathway name" value="VLDLR internalisation and degradation"/>
</dbReference>
<dbReference type="Reactome" id="R-SCE-8964038">
    <property type="pathway name" value="LDL clearance"/>
</dbReference>
<dbReference type="Reactome" id="R-SCE-9013420">
    <property type="pathway name" value="RHOU GTPase cycle"/>
</dbReference>
<dbReference type="Reactome" id="R-SCE-9013424">
    <property type="pathway name" value="RHOV GTPase cycle"/>
</dbReference>
<dbReference type="BioGRID-ORCS" id="852666">
    <property type="hits" value="4 hits in 10 CRISPR screens"/>
</dbReference>
<dbReference type="PRO" id="PR:P22137"/>
<dbReference type="Proteomes" id="UP000002311">
    <property type="component" value="Chromosome VII"/>
</dbReference>
<dbReference type="RNAct" id="P22137">
    <property type="molecule type" value="protein"/>
</dbReference>
<dbReference type="GO" id="GO:0030479">
    <property type="term" value="C:actin cortical patch"/>
    <property type="evidence" value="ECO:0000318"/>
    <property type="project" value="GO_Central"/>
</dbReference>
<dbReference type="GO" id="GO:0030132">
    <property type="term" value="C:clathrin coat of coated pit"/>
    <property type="evidence" value="ECO:0007669"/>
    <property type="project" value="InterPro"/>
</dbReference>
<dbReference type="GO" id="GO:0030130">
    <property type="term" value="C:clathrin coat of trans-Golgi network vesicle"/>
    <property type="evidence" value="ECO:0007669"/>
    <property type="project" value="InterPro"/>
</dbReference>
<dbReference type="GO" id="GO:0071439">
    <property type="term" value="C:clathrin complex"/>
    <property type="evidence" value="ECO:0000353"/>
    <property type="project" value="ComplexPortal"/>
</dbReference>
<dbReference type="GO" id="GO:0030125">
    <property type="term" value="C:clathrin vesicle coat"/>
    <property type="evidence" value="ECO:0000304"/>
    <property type="project" value="SGD"/>
</dbReference>
<dbReference type="GO" id="GO:0005829">
    <property type="term" value="C:cytosol"/>
    <property type="evidence" value="ECO:0007669"/>
    <property type="project" value="GOC"/>
</dbReference>
<dbReference type="GO" id="GO:0032051">
    <property type="term" value="F:clathrin light chain binding"/>
    <property type="evidence" value="ECO:0000318"/>
    <property type="project" value="GO_Central"/>
</dbReference>
<dbReference type="GO" id="GO:0005198">
    <property type="term" value="F:structural molecule activity"/>
    <property type="evidence" value="ECO:0000304"/>
    <property type="project" value="SGD"/>
</dbReference>
<dbReference type="GO" id="GO:0048268">
    <property type="term" value="P:clathrin coat assembly"/>
    <property type="evidence" value="ECO:0000303"/>
    <property type="project" value="ComplexPortal"/>
</dbReference>
<dbReference type="GO" id="GO:0030866">
    <property type="term" value="P:cortical actin cytoskeleton organization"/>
    <property type="evidence" value="ECO:0000315"/>
    <property type="project" value="SGD"/>
</dbReference>
<dbReference type="GO" id="GO:0006897">
    <property type="term" value="P:endocytosis"/>
    <property type="evidence" value="ECO:0000314"/>
    <property type="project" value="SGD"/>
</dbReference>
<dbReference type="GO" id="GO:0006895">
    <property type="term" value="P:Golgi to endosome transport"/>
    <property type="evidence" value="ECO:0000315"/>
    <property type="project" value="SGD"/>
</dbReference>
<dbReference type="GO" id="GO:0006886">
    <property type="term" value="P:intracellular protein transport"/>
    <property type="evidence" value="ECO:0007669"/>
    <property type="project" value="InterPro"/>
</dbReference>
<dbReference type="GO" id="GO:0006898">
    <property type="term" value="P:receptor-mediated endocytosis"/>
    <property type="evidence" value="ECO:0000318"/>
    <property type="project" value="GO_Central"/>
</dbReference>
<dbReference type="FunFam" id="1.25.40.10:FF:000001">
    <property type="entry name" value="Clathrin heavy chain"/>
    <property type="match status" value="1"/>
</dbReference>
<dbReference type="FunFam" id="1.25.40.10:FF:000002">
    <property type="entry name" value="Clathrin heavy chain"/>
    <property type="match status" value="1"/>
</dbReference>
<dbReference type="FunFam" id="1.25.40.10:FF:000005">
    <property type="entry name" value="Clathrin heavy chain"/>
    <property type="match status" value="1"/>
</dbReference>
<dbReference type="FunFam" id="1.25.40.10:FF:000082">
    <property type="entry name" value="Clathrin heavy chain"/>
    <property type="match status" value="1"/>
</dbReference>
<dbReference type="FunFam" id="1.25.40.730:FF:000007">
    <property type="entry name" value="Clathrin heavy chain"/>
    <property type="match status" value="1"/>
</dbReference>
<dbReference type="FunFam" id="2.130.10.110:FF:000003">
    <property type="entry name" value="Clathrin heavy chain"/>
    <property type="match status" value="1"/>
</dbReference>
<dbReference type="Gene3D" id="1.25.40.730">
    <property type="match status" value="1"/>
</dbReference>
<dbReference type="Gene3D" id="2.130.10.110">
    <property type="entry name" value="Clathrin heavy-chain terminal domain"/>
    <property type="match status" value="1"/>
</dbReference>
<dbReference type="Gene3D" id="1.25.40.10">
    <property type="entry name" value="Tetratricopeptide repeat domain"/>
    <property type="match status" value="4"/>
</dbReference>
<dbReference type="InterPro" id="IPR016024">
    <property type="entry name" value="ARM-type_fold"/>
</dbReference>
<dbReference type="InterPro" id="IPR055358">
    <property type="entry name" value="CHCR"/>
</dbReference>
<dbReference type="InterPro" id="IPR000547">
    <property type="entry name" value="Clathrin_H-chain/VPS_repeat"/>
</dbReference>
<dbReference type="InterPro" id="IPR015348">
    <property type="entry name" value="Clathrin_H-chain_linker_core"/>
</dbReference>
<dbReference type="InterPro" id="IPR016025">
    <property type="entry name" value="Clathrin_H-chain_N"/>
</dbReference>
<dbReference type="InterPro" id="IPR022365">
    <property type="entry name" value="Clathrin_H-chain_propeller_rpt"/>
</dbReference>
<dbReference type="InterPro" id="IPR016341">
    <property type="entry name" value="Clathrin_heavy_chain"/>
</dbReference>
<dbReference type="InterPro" id="IPR011990">
    <property type="entry name" value="TPR-like_helical_dom_sf"/>
</dbReference>
<dbReference type="PANTHER" id="PTHR10292:SF1">
    <property type="entry name" value="CLATHRIN HEAVY CHAIN"/>
    <property type="match status" value="1"/>
</dbReference>
<dbReference type="PANTHER" id="PTHR10292">
    <property type="entry name" value="CLATHRIN HEAVY CHAIN RELATED"/>
    <property type="match status" value="1"/>
</dbReference>
<dbReference type="Pfam" id="PF00637">
    <property type="entry name" value="Clathrin"/>
    <property type="match status" value="7"/>
</dbReference>
<dbReference type="Pfam" id="PF09268">
    <property type="entry name" value="Clathrin-link"/>
    <property type="match status" value="1"/>
</dbReference>
<dbReference type="Pfam" id="PF13838">
    <property type="entry name" value="Clathrin_H_link"/>
    <property type="match status" value="1"/>
</dbReference>
<dbReference type="Pfam" id="PF01394">
    <property type="entry name" value="Clathrin_propel"/>
    <property type="match status" value="1"/>
</dbReference>
<dbReference type="PIRSF" id="PIRSF002290">
    <property type="entry name" value="Clathrin_H_chain"/>
    <property type="match status" value="1"/>
</dbReference>
<dbReference type="SMART" id="SM00299">
    <property type="entry name" value="CLH"/>
    <property type="match status" value="7"/>
</dbReference>
<dbReference type="SUPFAM" id="SSF48371">
    <property type="entry name" value="ARM repeat"/>
    <property type="match status" value="6"/>
</dbReference>
<dbReference type="SUPFAM" id="SSF50989">
    <property type="entry name" value="Clathrin heavy-chain terminal domain"/>
    <property type="match status" value="1"/>
</dbReference>
<dbReference type="PROSITE" id="PS50236">
    <property type="entry name" value="CHCR"/>
    <property type="match status" value="7"/>
</dbReference>